<comment type="function">
    <text evidence="1">DNA-dependent RNA polymerase catalyzes the transcription of DNA into RNA using the four ribonucleoside triphosphates as substrates.</text>
</comment>
<comment type="catalytic activity">
    <reaction evidence="1">
        <text>RNA(n) + a ribonucleoside 5'-triphosphate = RNA(n+1) + diphosphate</text>
        <dbReference type="Rhea" id="RHEA:21248"/>
        <dbReference type="Rhea" id="RHEA-COMP:14527"/>
        <dbReference type="Rhea" id="RHEA-COMP:17342"/>
        <dbReference type="ChEBI" id="CHEBI:33019"/>
        <dbReference type="ChEBI" id="CHEBI:61557"/>
        <dbReference type="ChEBI" id="CHEBI:140395"/>
        <dbReference type="EC" id="2.7.7.6"/>
    </reaction>
</comment>
<comment type="cofactor">
    <cofactor evidence="1">
        <name>Mg(2+)</name>
        <dbReference type="ChEBI" id="CHEBI:18420"/>
    </cofactor>
    <text evidence="1">Binds 1 Mg(2+) ion per subunit.</text>
</comment>
<comment type="cofactor">
    <cofactor evidence="1">
        <name>Zn(2+)</name>
        <dbReference type="ChEBI" id="CHEBI:29105"/>
    </cofactor>
    <text evidence="1">Binds 2 Zn(2+) ions per subunit.</text>
</comment>
<comment type="subunit">
    <text evidence="1">The RNAP catalytic core consists of 2 alpha, 1 beta, 1 beta' and 1 omega subunit. When a sigma factor is associated with the core the holoenzyme is formed, which can initiate transcription.</text>
</comment>
<comment type="similarity">
    <text evidence="1">Belongs to the RNA polymerase beta' chain family.</text>
</comment>
<name>RPOC_NITWN</name>
<proteinExistence type="inferred from homology"/>
<organism>
    <name type="scientific">Nitrobacter winogradskyi (strain ATCC 25391 / DSM 10237 / CIP 104748 / NCIMB 11846 / Nb-255)</name>
    <dbReference type="NCBI Taxonomy" id="323098"/>
    <lineage>
        <taxon>Bacteria</taxon>
        <taxon>Pseudomonadati</taxon>
        <taxon>Pseudomonadota</taxon>
        <taxon>Alphaproteobacteria</taxon>
        <taxon>Hyphomicrobiales</taxon>
        <taxon>Nitrobacteraceae</taxon>
        <taxon>Nitrobacter</taxon>
    </lineage>
</organism>
<accession>Q3SSX9</accession>
<feature type="chain" id="PRO_0000225556" description="DNA-directed RNA polymerase subunit beta'">
    <location>
        <begin position="1"/>
        <end position="1399"/>
    </location>
</feature>
<feature type="binding site" evidence="1">
    <location>
        <position position="71"/>
    </location>
    <ligand>
        <name>Zn(2+)</name>
        <dbReference type="ChEBI" id="CHEBI:29105"/>
        <label>1</label>
    </ligand>
</feature>
<feature type="binding site" evidence="1">
    <location>
        <position position="73"/>
    </location>
    <ligand>
        <name>Zn(2+)</name>
        <dbReference type="ChEBI" id="CHEBI:29105"/>
        <label>1</label>
    </ligand>
</feature>
<feature type="binding site" evidence="1">
    <location>
        <position position="86"/>
    </location>
    <ligand>
        <name>Zn(2+)</name>
        <dbReference type="ChEBI" id="CHEBI:29105"/>
        <label>1</label>
    </ligand>
</feature>
<feature type="binding site" evidence="1">
    <location>
        <position position="89"/>
    </location>
    <ligand>
        <name>Zn(2+)</name>
        <dbReference type="ChEBI" id="CHEBI:29105"/>
        <label>1</label>
    </ligand>
</feature>
<feature type="binding site" evidence="1">
    <location>
        <position position="462"/>
    </location>
    <ligand>
        <name>Mg(2+)</name>
        <dbReference type="ChEBI" id="CHEBI:18420"/>
    </ligand>
</feature>
<feature type="binding site" evidence="1">
    <location>
        <position position="464"/>
    </location>
    <ligand>
        <name>Mg(2+)</name>
        <dbReference type="ChEBI" id="CHEBI:18420"/>
    </ligand>
</feature>
<feature type="binding site" evidence="1">
    <location>
        <position position="466"/>
    </location>
    <ligand>
        <name>Mg(2+)</name>
        <dbReference type="ChEBI" id="CHEBI:18420"/>
    </ligand>
</feature>
<feature type="binding site" evidence="1">
    <location>
        <position position="810"/>
    </location>
    <ligand>
        <name>Zn(2+)</name>
        <dbReference type="ChEBI" id="CHEBI:29105"/>
        <label>2</label>
    </ligand>
</feature>
<feature type="binding site" evidence="1">
    <location>
        <position position="884"/>
    </location>
    <ligand>
        <name>Zn(2+)</name>
        <dbReference type="ChEBI" id="CHEBI:29105"/>
        <label>2</label>
    </ligand>
</feature>
<feature type="binding site" evidence="1">
    <location>
        <position position="891"/>
    </location>
    <ligand>
        <name>Zn(2+)</name>
        <dbReference type="ChEBI" id="CHEBI:29105"/>
        <label>2</label>
    </ligand>
</feature>
<feature type="binding site" evidence="1">
    <location>
        <position position="894"/>
    </location>
    <ligand>
        <name>Zn(2+)</name>
        <dbReference type="ChEBI" id="CHEBI:29105"/>
        <label>2</label>
    </ligand>
</feature>
<protein>
    <recommendedName>
        <fullName evidence="1">DNA-directed RNA polymerase subunit beta'</fullName>
        <shortName evidence="1">RNAP subunit beta'</shortName>
        <ecNumber evidence="1">2.7.7.6</ecNumber>
    </recommendedName>
    <alternativeName>
        <fullName evidence="1">RNA polymerase subunit beta'</fullName>
    </alternativeName>
    <alternativeName>
        <fullName evidence="1">Transcriptase subunit beta'</fullName>
    </alternativeName>
</protein>
<evidence type="ECO:0000255" key="1">
    <source>
        <dbReference type="HAMAP-Rule" id="MF_01322"/>
    </source>
</evidence>
<keyword id="KW-0240">DNA-directed RNA polymerase</keyword>
<keyword id="KW-0460">Magnesium</keyword>
<keyword id="KW-0479">Metal-binding</keyword>
<keyword id="KW-0548">Nucleotidyltransferase</keyword>
<keyword id="KW-1185">Reference proteome</keyword>
<keyword id="KW-0804">Transcription</keyword>
<keyword id="KW-0808">Transferase</keyword>
<keyword id="KW-0862">Zinc</keyword>
<dbReference type="EC" id="2.7.7.6" evidence="1"/>
<dbReference type="EMBL" id="CP000115">
    <property type="protein sequence ID" value="ABA04612.1"/>
    <property type="molecule type" value="Genomic_DNA"/>
</dbReference>
<dbReference type="RefSeq" id="WP_011314630.1">
    <property type="nucleotide sequence ID" value="NC_007406.1"/>
</dbReference>
<dbReference type="SMR" id="Q3SSX9"/>
<dbReference type="STRING" id="323098.Nwi_1351"/>
<dbReference type="KEGG" id="nwi:Nwi_1351"/>
<dbReference type="eggNOG" id="COG0086">
    <property type="taxonomic scope" value="Bacteria"/>
</dbReference>
<dbReference type="HOGENOM" id="CLU_000524_3_1_5"/>
<dbReference type="OrthoDB" id="9815296at2"/>
<dbReference type="Proteomes" id="UP000002531">
    <property type="component" value="Chromosome"/>
</dbReference>
<dbReference type="GO" id="GO:0000428">
    <property type="term" value="C:DNA-directed RNA polymerase complex"/>
    <property type="evidence" value="ECO:0007669"/>
    <property type="project" value="UniProtKB-KW"/>
</dbReference>
<dbReference type="GO" id="GO:0003677">
    <property type="term" value="F:DNA binding"/>
    <property type="evidence" value="ECO:0007669"/>
    <property type="project" value="UniProtKB-UniRule"/>
</dbReference>
<dbReference type="GO" id="GO:0003899">
    <property type="term" value="F:DNA-directed RNA polymerase activity"/>
    <property type="evidence" value="ECO:0007669"/>
    <property type="project" value="UniProtKB-UniRule"/>
</dbReference>
<dbReference type="GO" id="GO:0000287">
    <property type="term" value="F:magnesium ion binding"/>
    <property type="evidence" value="ECO:0007669"/>
    <property type="project" value="UniProtKB-UniRule"/>
</dbReference>
<dbReference type="GO" id="GO:0008270">
    <property type="term" value="F:zinc ion binding"/>
    <property type="evidence" value="ECO:0007669"/>
    <property type="project" value="UniProtKB-UniRule"/>
</dbReference>
<dbReference type="GO" id="GO:0006351">
    <property type="term" value="P:DNA-templated transcription"/>
    <property type="evidence" value="ECO:0007669"/>
    <property type="project" value="UniProtKB-UniRule"/>
</dbReference>
<dbReference type="CDD" id="cd02655">
    <property type="entry name" value="RNAP_beta'_C"/>
    <property type="match status" value="1"/>
</dbReference>
<dbReference type="CDD" id="cd01609">
    <property type="entry name" value="RNAP_beta'_N"/>
    <property type="match status" value="1"/>
</dbReference>
<dbReference type="Gene3D" id="1.10.132.30">
    <property type="match status" value="1"/>
</dbReference>
<dbReference type="Gene3D" id="1.10.150.390">
    <property type="match status" value="1"/>
</dbReference>
<dbReference type="Gene3D" id="1.10.1790.20">
    <property type="match status" value="1"/>
</dbReference>
<dbReference type="Gene3D" id="1.10.40.90">
    <property type="match status" value="1"/>
</dbReference>
<dbReference type="Gene3D" id="2.40.40.20">
    <property type="match status" value="1"/>
</dbReference>
<dbReference type="Gene3D" id="2.40.50.100">
    <property type="match status" value="3"/>
</dbReference>
<dbReference type="Gene3D" id="4.10.860.120">
    <property type="entry name" value="RNA polymerase II, clamp domain"/>
    <property type="match status" value="1"/>
</dbReference>
<dbReference type="Gene3D" id="1.10.274.100">
    <property type="entry name" value="RNA polymerase Rpb1, domain 3"/>
    <property type="match status" value="1"/>
</dbReference>
<dbReference type="HAMAP" id="MF_01322">
    <property type="entry name" value="RNApol_bact_RpoC"/>
    <property type="match status" value="1"/>
</dbReference>
<dbReference type="InterPro" id="IPR045867">
    <property type="entry name" value="DNA-dir_RpoC_beta_prime"/>
</dbReference>
<dbReference type="InterPro" id="IPR012754">
    <property type="entry name" value="DNA-dir_RpoC_beta_prime_bact"/>
</dbReference>
<dbReference type="InterPro" id="IPR000722">
    <property type="entry name" value="RNA_pol_asu"/>
</dbReference>
<dbReference type="InterPro" id="IPR006592">
    <property type="entry name" value="RNA_pol_N"/>
</dbReference>
<dbReference type="InterPro" id="IPR007080">
    <property type="entry name" value="RNA_pol_Rpb1_1"/>
</dbReference>
<dbReference type="InterPro" id="IPR007066">
    <property type="entry name" value="RNA_pol_Rpb1_3"/>
</dbReference>
<dbReference type="InterPro" id="IPR042102">
    <property type="entry name" value="RNA_pol_Rpb1_3_sf"/>
</dbReference>
<dbReference type="InterPro" id="IPR007083">
    <property type="entry name" value="RNA_pol_Rpb1_4"/>
</dbReference>
<dbReference type="InterPro" id="IPR007081">
    <property type="entry name" value="RNA_pol_Rpb1_5"/>
</dbReference>
<dbReference type="InterPro" id="IPR044893">
    <property type="entry name" value="RNA_pol_Rpb1_clamp_domain"/>
</dbReference>
<dbReference type="InterPro" id="IPR038120">
    <property type="entry name" value="Rpb1_funnel_sf"/>
</dbReference>
<dbReference type="NCBIfam" id="TIGR02386">
    <property type="entry name" value="rpoC_TIGR"/>
    <property type="match status" value="1"/>
</dbReference>
<dbReference type="PANTHER" id="PTHR19376">
    <property type="entry name" value="DNA-DIRECTED RNA POLYMERASE"/>
    <property type="match status" value="1"/>
</dbReference>
<dbReference type="PANTHER" id="PTHR19376:SF54">
    <property type="entry name" value="DNA-DIRECTED RNA POLYMERASE SUBUNIT BETA"/>
    <property type="match status" value="1"/>
</dbReference>
<dbReference type="Pfam" id="PF04997">
    <property type="entry name" value="RNA_pol_Rpb1_1"/>
    <property type="match status" value="1"/>
</dbReference>
<dbReference type="Pfam" id="PF00623">
    <property type="entry name" value="RNA_pol_Rpb1_2"/>
    <property type="match status" value="2"/>
</dbReference>
<dbReference type="Pfam" id="PF04983">
    <property type="entry name" value="RNA_pol_Rpb1_3"/>
    <property type="match status" value="1"/>
</dbReference>
<dbReference type="Pfam" id="PF05000">
    <property type="entry name" value="RNA_pol_Rpb1_4"/>
    <property type="match status" value="1"/>
</dbReference>
<dbReference type="Pfam" id="PF04998">
    <property type="entry name" value="RNA_pol_Rpb1_5"/>
    <property type="match status" value="1"/>
</dbReference>
<dbReference type="SMART" id="SM00663">
    <property type="entry name" value="RPOLA_N"/>
    <property type="match status" value="1"/>
</dbReference>
<dbReference type="SUPFAM" id="SSF64484">
    <property type="entry name" value="beta and beta-prime subunits of DNA dependent RNA-polymerase"/>
    <property type="match status" value="1"/>
</dbReference>
<sequence length="1399" mass="155812">MNQEVMNLFNPTTPAQVFDQIRISIASPEKILSWSYGEIKKPETINYRTFKPERDGLFCARIFGPIKDYECLCGKYKRMKYKGIICEKCSVEVTLSRVRRERMGHIELAAPVAHIWFLKSLPSRIGLLLDMTLKDLERILYFEYYVVLEPGLTALKDRQLLSEEEYLRAQDEYGQDSFTAMIGAEAIRELLKGLELERLEAELRAEMQATESDIKHKKLAKRLKIVEAFRFSGNKPEWMILTVVPVIPPDLRPLVPLDGGRFATSDLNDLYRRVINRNNRLKRLMELRAPDIIIRNEKRMLQEAVDALFDNGRRGRVITGANKRPLKSLADMLKGKQGRFRQNLLGKRVDYSGRSVIVVGPELKLHQCGLPKKMALELFKPFIYSRLDAKGLSTTVKQAKKLVEKERPEVWDILDEVIREHPVLLNRAPTLHRLGIQAFEPTLIEGKAIQLHPLVCAAFNADFDGDQMAVHVPLSLEAQLEARVLMMSTNNILHPANGQPIIVPSQDIVLGLYYLSIMREGLPGEGKVFGDMAELEHALHSGVIHLHTSIKYRWDQTDENGEPIKRLIDTTAGRVMLGQVLPKSQKISFDAINKLMTKREISGVIDQVYRHCGQKETVIFCDRIMALGFYNAFKAGISFGKDDMVVPHGKWKIVDTTRALAKDFEQQYNDGLITHGEKYNKVVDAWSKATEEIAKEMMKEISSTKKDAKGIEAQINSIYMMAHSGARGSPAQMRQLAGMRGLMAKPSGEIIETPIISNFKEGLSVLEYFNSTHGARKGLADTALKTANSGYLTRRLVDVAQDCIITQDDCGTKLGIKMRAIVDAGTVVASLGSRILGRTACEDIRNPASNEVLIERNTLMEESHVDQISKAGIQEVKIRSALTCELINGICGKCYGRDLARGTPVNHGEAVGVIAAQSIGEPGTQLTMRTFHIGGAAQINEQSVIESNFDGKITIRNKAIARNGEGHLVAMVRNMVVAVVDADGTERATHRIQYGARMHVDEGDMVKRGQRIAEWDPYTRPVLTELEGTIGFEDLIEGQSISETLDESTGIAKRIVIDWRGTRGGADLRPAIVIKGKDGKVLKLPRGGDARYMLSVDAILSVDVGAKVKPGDILARISTESAKTRDITGGLPRVAELFEARRPKDAAIIAEIAGTIRFGRDYKNKRRISIEPVDQEEETREYLIPKGKHIHLQDGDIVEKGDFIVDGNPAPHDILAIKGIEELAAYLVNEIQEVYRLQGVLINDKHIEVIVRQMLQKVEIIDQGETDMISGEQIDKIEFDRLNLKAQEEGKKIATGTPVLLGITKASLQTRSFFSAASFQETTRVLTEAAVNGKVDPLEGLKENVIVGRLIPAGTGASMAKIREVAVKRDRLILDEREKQAAIVPSAPEAEPLALPPAE</sequence>
<gene>
    <name evidence="1" type="primary">rpoC</name>
    <name type="ordered locus">Nwi_1351</name>
</gene>
<reference key="1">
    <citation type="journal article" date="2006" name="Appl. Environ. Microbiol.">
        <title>Genome sequence of the chemolithoautotrophic nitrite-oxidizing bacterium Nitrobacter winogradskyi Nb-255.</title>
        <authorList>
            <person name="Starkenburg S.R."/>
            <person name="Chain P.S.G."/>
            <person name="Sayavedra-Soto L.A."/>
            <person name="Hauser L."/>
            <person name="Land M.L."/>
            <person name="Larimer F.W."/>
            <person name="Malfatti S.A."/>
            <person name="Klotz M.G."/>
            <person name="Bottomley P.J."/>
            <person name="Arp D.J."/>
            <person name="Hickey W.J."/>
        </authorList>
    </citation>
    <scope>NUCLEOTIDE SEQUENCE [LARGE SCALE GENOMIC DNA]</scope>
    <source>
        <strain>ATCC 25391 / DSM 10237 / CIP 104748 / NCIMB 11846 / Nb-255</strain>
    </source>
</reference>